<accession>Q0SNX4</accession>
<accession>G0IR33</accession>
<reference key="1">
    <citation type="journal article" date="2006" name="BMC Genomics">
        <title>Comparative genome analysis: selection pressure on the Borrelia vls cassettes is essential for infectivity.</title>
        <authorList>
            <person name="Gloeckner G."/>
            <person name="Schulte-Spechtel U."/>
            <person name="Schilhabel M."/>
            <person name="Felder M."/>
            <person name="Suehnel J."/>
            <person name="Wilske B."/>
            <person name="Platzer M."/>
        </authorList>
    </citation>
    <scope>NUCLEOTIDE SEQUENCE [LARGE SCALE GENOMIC DNA]</scope>
    <source>
        <strain>PKo</strain>
    </source>
</reference>
<reference key="2">
    <citation type="journal article" date="2011" name="J. Bacteriol.">
        <title>Whole-genome sequences of two Borrelia afzelii and two Borrelia garinii Lyme disease agent isolates.</title>
        <authorList>
            <person name="Casjens S.R."/>
            <person name="Mongodin E.F."/>
            <person name="Qiu W.G."/>
            <person name="Dunn J.J."/>
            <person name="Luft B.J."/>
            <person name="Fraser-Liggett C.M."/>
            <person name="Schutzer S.E."/>
        </authorList>
    </citation>
    <scope>NUCLEOTIDE SEQUENCE [LARGE SCALE GENOMIC DNA]</scope>
    <source>
        <strain>PKo</strain>
    </source>
</reference>
<feature type="chain" id="PRO_1000050661" description="Large ribosomal subunit protein bL35">
    <location>
        <begin position="1"/>
        <end position="66"/>
    </location>
</feature>
<organism>
    <name type="scientific">Borreliella afzelii (strain PKo)</name>
    <name type="common">Borrelia afzelii</name>
    <dbReference type="NCBI Taxonomy" id="390236"/>
    <lineage>
        <taxon>Bacteria</taxon>
        <taxon>Pseudomonadati</taxon>
        <taxon>Spirochaetota</taxon>
        <taxon>Spirochaetia</taxon>
        <taxon>Spirochaetales</taxon>
        <taxon>Borreliaceae</taxon>
        <taxon>Borreliella</taxon>
    </lineage>
</organism>
<proteinExistence type="inferred from homology"/>
<sequence length="66" mass="7874">MANKMKTRKSAKKRYSFTVNGKVKYKKQNLRHILTKKSSKRKRNLRKSGNLSCFEVKRIKTLLPYD</sequence>
<gene>
    <name evidence="1" type="primary">rpmI</name>
    <name type="ordered locus">BAPKO_0192</name>
    <name type="ordered locus">BafPKo_0186</name>
</gene>
<dbReference type="EMBL" id="CP000395">
    <property type="protein sequence ID" value="ABH01454.1"/>
    <property type="molecule type" value="Genomic_DNA"/>
</dbReference>
<dbReference type="EMBL" id="CP002933">
    <property type="protein sequence ID" value="AEL69419.1"/>
    <property type="molecule type" value="Genomic_DNA"/>
</dbReference>
<dbReference type="RefSeq" id="WP_004790647.1">
    <property type="nucleotide sequence ID" value="NZ_CP160066.1"/>
</dbReference>
<dbReference type="SMR" id="Q0SNX4"/>
<dbReference type="STRING" id="29518.BLA32_03365"/>
<dbReference type="GeneID" id="77265028"/>
<dbReference type="KEGG" id="baf:BAPKO_0192"/>
<dbReference type="KEGG" id="bafz:BafPKo_0186"/>
<dbReference type="PATRIC" id="fig|390236.22.peg.184"/>
<dbReference type="eggNOG" id="COG0291">
    <property type="taxonomic scope" value="Bacteria"/>
</dbReference>
<dbReference type="HOGENOM" id="CLU_169643_1_1_12"/>
<dbReference type="OrthoDB" id="47476at2"/>
<dbReference type="Proteomes" id="UP000005216">
    <property type="component" value="Chromosome"/>
</dbReference>
<dbReference type="GO" id="GO:0022625">
    <property type="term" value="C:cytosolic large ribosomal subunit"/>
    <property type="evidence" value="ECO:0007669"/>
    <property type="project" value="TreeGrafter"/>
</dbReference>
<dbReference type="GO" id="GO:0003735">
    <property type="term" value="F:structural constituent of ribosome"/>
    <property type="evidence" value="ECO:0007669"/>
    <property type="project" value="InterPro"/>
</dbReference>
<dbReference type="GO" id="GO:0006412">
    <property type="term" value="P:translation"/>
    <property type="evidence" value="ECO:0007669"/>
    <property type="project" value="UniProtKB-UniRule"/>
</dbReference>
<dbReference type="FunFam" id="4.10.410.60:FF:000001">
    <property type="entry name" value="50S ribosomal protein L35"/>
    <property type="match status" value="1"/>
</dbReference>
<dbReference type="Gene3D" id="4.10.410.60">
    <property type="match status" value="1"/>
</dbReference>
<dbReference type="HAMAP" id="MF_00514">
    <property type="entry name" value="Ribosomal_bL35"/>
    <property type="match status" value="1"/>
</dbReference>
<dbReference type="InterPro" id="IPR001706">
    <property type="entry name" value="Ribosomal_bL35"/>
</dbReference>
<dbReference type="InterPro" id="IPR021137">
    <property type="entry name" value="Ribosomal_bL35-like"/>
</dbReference>
<dbReference type="InterPro" id="IPR018265">
    <property type="entry name" value="Ribosomal_bL35_CS"/>
</dbReference>
<dbReference type="InterPro" id="IPR037229">
    <property type="entry name" value="Ribosomal_bL35_sf"/>
</dbReference>
<dbReference type="NCBIfam" id="TIGR00001">
    <property type="entry name" value="rpmI_bact"/>
    <property type="match status" value="1"/>
</dbReference>
<dbReference type="PANTHER" id="PTHR33343">
    <property type="entry name" value="54S RIBOSOMAL PROTEIN BL35M"/>
    <property type="match status" value="1"/>
</dbReference>
<dbReference type="PANTHER" id="PTHR33343:SF1">
    <property type="entry name" value="LARGE RIBOSOMAL SUBUNIT PROTEIN BL35M"/>
    <property type="match status" value="1"/>
</dbReference>
<dbReference type="Pfam" id="PF01632">
    <property type="entry name" value="Ribosomal_L35p"/>
    <property type="match status" value="1"/>
</dbReference>
<dbReference type="PRINTS" id="PR00064">
    <property type="entry name" value="RIBOSOMALL35"/>
</dbReference>
<dbReference type="SUPFAM" id="SSF143034">
    <property type="entry name" value="L35p-like"/>
    <property type="match status" value="1"/>
</dbReference>
<dbReference type="PROSITE" id="PS00936">
    <property type="entry name" value="RIBOSOMAL_L35"/>
    <property type="match status" value="1"/>
</dbReference>
<evidence type="ECO:0000255" key="1">
    <source>
        <dbReference type="HAMAP-Rule" id="MF_00514"/>
    </source>
</evidence>
<evidence type="ECO:0000305" key="2"/>
<protein>
    <recommendedName>
        <fullName evidence="1">Large ribosomal subunit protein bL35</fullName>
    </recommendedName>
    <alternativeName>
        <fullName evidence="2">50S ribosomal protein L35</fullName>
    </alternativeName>
</protein>
<name>RL35_BORAP</name>
<comment type="similarity">
    <text evidence="1">Belongs to the bacterial ribosomal protein bL35 family.</text>
</comment>
<keyword id="KW-0687">Ribonucleoprotein</keyword>
<keyword id="KW-0689">Ribosomal protein</keyword>